<evidence type="ECO:0000255" key="1">
    <source>
        <dbReference type="HAMAP-Rule" id="MF_00188"/>
    </source>
</evidence>
<reference key="1">
    <citation type="journal article" date="2003" name="Nat. Genet.">
        <title>Comparative analysis of the genome sequences of Bordetella pertussis, Bordetella parapertussis and Bordetella bronchiseptica.</title>
        <authorList>
            <person name="Parkhill J."/>
            <person name="Sebaihia M."/>
            <person name="Preston A."/>
            <person name="Murphy L.D."/>
            <person name="Thomson N.R."/>
            <person name="Harris D.E."/>
            <person name="Holden M.T.G."/>
            <person name="Churcher C.M."/>
            <person name="Bentley S.D."/>
            <person name="Mungall K.L."/>
            <person name="Cerdeno-Tarraga A.-M."/>
            <person name="Temple L."/>
            <person name="James K.D."/>
            <person name="Harris B."/>
            <person name="Quail M.A."/>
            <person name="Achtman M."/>
            <person name="Atkin R."/>
            <person name="Baker S."/>
            <person name="Basham D."/>
            <person name="Bason N."/>
            <person name="Cherevach I."/>
            <person name="Chillingworth T."/>
            <person name="Collins M."/>
            <person name="Cronin A."/>
            <person name="Davis P."/>
            <person name="Doggett J."/>
            <person name="Feltwell T."/>
            <person name="Goble A."/>
            <person name="Hamlin N."/>
            <person name="Hauser H."/>
            <person name="Holroyd S."/>
            <person name="Jagels K."/>
            <person name="Leather S."/>
            <person name="Moule S."/>
            <person name="Norberczak H."/>
            <person name="O'Neil S."/>
            <person name="Ormond D."/>
            <person name="Price C."/>
            <person name="Rabbinowitsch E."/>
            <person name="Rutter S."/>
            <person name="Sanders M."/>
            <person name="Saunders D."/>
            <person name="Seeger K."/>
            <person name="Sharp S."/>
            <person name="Simmonds M."/>
            <person name="Skelton J."/>
            <person name="Squares R."/>
            <person name="Squares S."/>
            <person name="Stevens K."/>
            <person name="Unwin L."/>
            <person name="Whitehead S."/>
            <person name="Barrell B.G."/>
            <person name="Maskell D.J."/>
        </authorList>
    </citation>
    <scope>NUCLEOTIDE SEQUENCE [LARGE SCALE GENOMIC DNA]</scope>
    <source>
        <strain>12822 / ATCC BAA-587 / NCTC 13253</strain>
    </source>
</reference>
<proteinExistence type="inferred from homology"/>
<dbReference type="EC" id="3.4.24.-" evidence="1"/>
<dbReference type="EMBL" id="BX640430">
    <property type="protein sequence ID" value="CAE37741.1"/>
    <property type="molecule type" value="Genomic_DNA"/>
</dbReference>
<dbReference type="RefSeq" id="WP_003813142.1">
    <property type="nucleotide sequence ID" value="NC_002928.3"/>
</dbReference>
<dbReference type="SMR" id="Q7W7R8"/>
<dbReference type="MEROPS" id="M48.002"/>
<dbReference type="GeneID" id="93204230"/>
<dbReference type="KEGG" id="bpa:BPP2446"/>
<dbReference type="HOGENOM" id="CLU_042266_1_0_4"/>
<dbReference type="Proteomes" id="UP000001421">
    <property type="component" value="Chromosome"/>
</dbReference>
<dbReference type="GO" id="GO:0005886">
    <property type="term" value="C:plasma membrane"/>
    <property type="evidence" value="ECO:0007669"/>
    <property type="project" value="UniProtKB-SubCell"/>
</dbReference>
<dbReference type="GO" id="GO:0004222">
    <property type="term" value="F:metalloendopeptidase activity"/>
    <property type="evidence" value="ECO:0007669"/>
    <property type="project" value="UniProtKB-UniRule"/>
</dbReference>
<dbReference type="GO" id="GO:0008270">
    <property type="term" value="F:zinc ion binding"/>
    <property type="evidence" value="ECO:0007669"/>
    <property type="project" value="UniProtKB-UniRule"/>
</dbReference>
<dbReference type="GO" id="GO:0006508">
    <property type="term" value="P:proteolysis"/>
    <property type="evidence" value="ECO:0007669"/>
    <property type="project" value="UniProtKB-KW"/>
</dbReference>
<dbReference type="CDD" id="cd07335">
    <property type="entry name" value="M48B_HtpX_like"/>
    <property type="match status" value="1"/>
</dbReference>
<dbReference type="Gene3D" id="3.30.2010.10">
    <property type="entry name" value="Metalloproteases ('zincins'), catalytic domain"/>
    <property type="match status" value="1"/>
</dbReference>
<dbReference type="HAMAP" id="MF_00188">
    <property type="entry name" value="Pept_M48_protease_HtpX"/>
    <property type="match status" value="1"/>
</dbReference>
<dbReference type="InterPro" id="IPR050083">
    <property type="entry name" value="HtpX_protease"/>
</dbReference>
<dbReference type="InterPro" id="IPR022919">
    <property type="entry name" value="Pept_M48_protease_HtpX"/>
</dbReference>
<dbReference type="InterPro" id="IPR001915">
    <property type="entry name" value="Peptidase_M48"/>
</dbReference>
<dbReference type="NCBIfam" id="NF003965">
    <property type="entry name" value="PRK05457.1"/>
    <property type="match status" value="1"/>
</dbReference>
<dbReference type="PANTHER" id="PTHR43221">
    <property type="entry name" value="PROTEASE HTPX"/>
    <property type="match status" value="1"/>
</dbReference>
<dbReference type="PANTHER" id="PTHR43221:SF1">
    <property type="entry name" value="PROTEASE HTPX"/>
    <property type="match status" value="1"/>
</dbReference>
<dbReference type="Pfam" id="PF01435">
    <property type="entry name" value="Peptidase_M48"/>
    <property type="match status" value="1"/>
</dbReference>
<feature type="chain" id="PRO_1000020853" description="Protease HtpX homolog">
    <location>
        <begin position="1"/>
        <end position="293"/>
    </location>
</feature>
<feature type="transmembrane region" description="Helical" evidence="1">
    <location>
        <begin position="4"/>
        <end position="24"/>
    </location>
</feature>
<feature type="transmembrane region" description="Helical" evidence="1">
    <location>
        <begin position="38"/>
        <end position="58"/>
    </location>
</feature>
<feature type="transmembrane region" description="Helical" evidence="1">
    <location>
        <begin position="161"/>
        <end position="181"/>
    </location>
</feature>
<feature type="transmembrane region" description="Helical" evidence="1">
    <location>
        <begin position="198"/>
        <end position="218"/>
    </location>
</feature>
<feature type="active site" evidence="1">
    <location>
        <position position="147"/>
    </location>
</feature>
<feature type="binding site" evidence="1">
    <location>
        <position position="146"/>
    </location>
    <ligand>
        <name>Zn(2+)</name>
        <dbReference type="ChEBI" id="CHEBI:29105"/>
        <note>catalytic</note>
    </ligand>
</feature>
<feature type="binding site" evidence="1">
    <location>
        <position position="150"/>
    </location>
    <ligand>
        <name>Zn(2+)</name>
        <dbReference type="ChEBI" id="CHEBI:29105"/>
        <note>catalytic</note>
    </ligand>
</feature>
<feature type="binding site" evidence="1">
    <location>
        <position position="223"/>
    </location>
    <ligand>
        <name>Zn(2+)</name>
        <dbReference type="ChEBI" id="CHEBI:29105"/>
        <note>catalytic</note>
    </ligand>
</feature>
<keyword id="KW-0997">Cell inner membrane</keyword>
<keyword id="KW-1003">Cell membrane</keyword>
<keyword id="KW-0378">Hydrolase</keyword>
<keyword id="KW-0472">Membrane</keyword>
<keyword id="KW-0479">Metal-binding</keyword>
<keyword id="KW-0482">Metalloprotease</keyword>
<keyword id="KW-0645">Protease</keyword>
<keyword id="KW-0812">Transmembrane</keyword>
<keyword id="KW-1133">Transmembrane helix</keyword>
<keyword id="KW-0862">Zinc</keyword>
<gene>
    <name evidence="1" type="primary">htpX</name>
    <name type="ordered locus">BPP2446</name>
</gene>
<organism>
    <name type="scientific">Bordetella parapertussis (strain 12822 / ATCC BAA-587 / NCTC 13253)</name>
    <dbReference type="NCBI Taxonomy" id="257311"/>
    <lineage>
        <taxon>Bacteria</taxon>
        <taxon>Pseudomonadati</taxon>
        <taxon>Pseudomonadota</taxon>
        <taxon>Betaproteobacteria</taxon>
        <taxon>Burkholderiales</taxon>
        <taxon>Alcaligenaceae</taxon>
        <taxon>Bordetella</taxon>
    </lineage>
</organism>
<name>HTPX_BORPA</name>
<sequence length="293" mass="31390">MKRIFLFLITNLAVMVVLSATMRILGVDRFLTAQGLNLTGLLIFSAVIGFTGAIISLLMSKPMAKWSTGARVIDPNAPANQREAWLLDTVHQLADRAGIGRPEVAIYQGEPNAFATGAFRNDSLVAVSTGLLDSMTEEEVAAVLGHEVAHVANGDMVTLTLIQGVVNTFVVFLARVVGYFVDRAILKNERGVGLGYYATVIVCEIVFGILASIIVAWFSRQREYRADAGSAHLMGSREPMIRALARLGGLEPGELPKSFEASGISGKNGISAMFASHPPIQARIAALQHARLG</sequence>
<protein>
    <recommendedName>
        <fullName evidence="1">Protease HtpX homolog</fullName>
        <ecNumber evidence="1">3.4.24.-</ecNumber>
    </recommendedName>
</protein>
<comment type="cofactor">
    <cofactor evidence="1">
        <name>Zn(2+)</name>
        <dbReference type="ChEBI" id="CHEBI:29105"/>
    </cofactor>
    <text evidence="1">Binds 1 zinc ion per subunit.</text>
</comment>
<comment type="subcellular location">
    <subcellularLocation>
        <location evidence="1">Cell inner membrane</location>
        <topology evidence="1">Multi-pass membrane protein</topology>
    </subcellularLocation>
</comment>
<comment type="similarity">
    <text evidence="1">Belongs to the peptidase M48B family.</text>
</comment>
<accession>Q7W7R8</accession>